<protein>
    <recommendedName>
        <fullName>Zinc finger CCCH domain-containing protein 19</fullName>
        <shortName>OsC3H19</shortName>
    </recommendedName>
</protein>
<reference key="1">
    <citation type="journal article" date="2005" name="Nature">
        <title>The map-based sequence of the rice genome.</title>
        <authorList>
            <consortium name="International rice genome sequencing project (IRGSP)"/>
        </authorList>
    </citation>
    <scope>NUCLEOTIDE SEQUENCE [LARGE SCALE GENOMIC DNA]</scope>
    <source>
        <strain>cv. Nipponbare</strain>
    </source>
</reference>
<reference key="2">
    <citation type="journal article" date="2008" name="Nucleic Acids Res.">
        <title>The rice annotation project database (RAP-DB): 2008 update.</title>
        <authorList>
            <consortium name="The rice annotation project (RAP)"/>
        </authorList>
    </citation>
    <scope>GENOME REANNOTATION</scope>
    <source>
        <strain>cv. Nipponbare</strain>
    </source>
</reference>
<reference key="3">
    <citation type="journal article" date="2013" name="Rice">
        <title>Improvement of the Oryza sativa Nipponbare reference genome using next generation sequence and optical map data.</title>
        <authorList>
            <person name="Kawahara Y."/>
            <person name="de la Bastide M."/>
            <person name="Hamilton J.P."/>
            <person name="Kanamori H."/>
            <person name="McCombie W.R."/>
            <person name="Ouyang S."/>
            <person name="Schwartz D.C."/>
            <person name="Tanaka T."/>
            <person name="Wu J."/>
            <person name="Zhou S."/>
            <person name="Childs K.L."/>
            <person name="Davidson R.M."/>
            <person name="Lin H."/>
            <person name="Quesada-Ocampo L."/>
            <person name="Vaillancourt B."/>
            <person name="Sakai H."/>
            <person name="Lee S.S."/>
            <person name="Kim J."/>
            <person name="Numa H."/>
            <person name="Itoh T."/>
            <person name="Buell C.R."/>
            <person name="Matsumoto T."/>
        </authorList>
    </citation>
    <scope>GENOME REANNOTATION</scope>
    <source>
        <strain>cv. Nipponbare</strain>
    </source>
</reference>
<reference key="4">
    <citation type="journal article" date="2005" name="PLoS Biol.">
        <title>The genomes of Oryza sativa: a history of duplications.</title>
        <authorList>
            <person name="Yu J."/>
            <person name="Wang J."/>
            <person name="Lin W."/>
            <person name="Li S."/>
            <person name="Li H."/>
            <person name="Zhou J."/>
            <person name="Ni P."/>
            <person name="Dong W."/>
            <person name="Hu S."/>
            <person name="Zeng C."/>
            <person name="Zhang J."/>
            <person name="Zhang Y."/>
            <person name="Li R."/>
            <person name="Xu Z."/>
            <person name="Li S."/>
            <person name="Li X."/>
            <person name="Zheng H."/>
            <person name="Cong L."/>
            <person name="Lin L."/>
            <person name="Yin J."/>
            <person name="Geng J."/>
            <person name="Li G."/>
            <person name="Shi J."/>
            <person name="Liu J."/>
            <person name="Lv H."/>
            <person name="Li J."/>
            <person name="Wang J."/>
            <person name="Deng Y."/>
            <person name="Ran L."/>
            <person name="Shi X."/>
            <person name="Wang X."/>
            <person name="Wu Q."/>
            <person name="Li C."/>
            <person name="Ren X."/>
            <person name="Wang J."/>
            <person name="Wang X."/>
            <person name="Li D."/>
            <person name="Liu D."/>
            <person name="Zhang X."/>
            <person name="Ji Z."/>
            <person name="Zhao W."/>
            <person name="Sun Y."/>
            <person name="Zhang Z."/>
            <person name="Bao J."/>
            <person name="Han Y."/>
            <person name="Dong L."/>
            <person name="Ji J."/>
            <person name="Chen P."/>
            <person name="Wu S."/>
            <person name="Liu J."/>
            <person name="Xiao Y."/>
            <person name="Bu D."/>
            <person name="Tan J."/>
            <person name="Yang L."/>
            <person name="Ye C."/>
            <person name="Zhang J."/>
            <person name="Xu J."/>
            <person name="Zhou Y."/>
            <person name="Yu Y."/>
            <person name="Zhang B."/>
            <person name="Zhuang S."/>
            <person name="Wei H."/>
            <person name="Liu B."/>
            <person name="Lei M."/>
            <person name="Yu H."/>
            <person name="Li Y."/>
            <person name="Xu H."/>
            <person name="Wei S."/>
            <person name="He X."/>
            <person name="Fang L."/>
            <person name="Zhang Z."/>
            <person name="Zhang Y."/>
            <person name="Huang X."/>
            <person name="Su Z."/>
            <person name="Tong W."/>
            <person name="Li J."/>
            <person name="Tong Z."/>
            <person name="Li S."/>
            <person name="Ye J."/>
            <person name="Wang L."/>
            <person name="Fang L."/>
            <person name="Lei T."/>
            <person name="Chen C.-S."/>
            <person name="Chen H.-C."/>
            <person name="Xu Z."/>
            <person name="Li H."/>
            <person name="Huang H."/>
            <person name="Zhang F."/>
            <person name="Xu H."/>
            <person name="Li N."/>
            <person name="Zhao C."/>
            <person name="Li S."/>
            <person name="Dong L."/>
            <person name="Huang Y."/>
            <person name="Li L."/>
            <person name="Xi Y."/>
            <person name="Qi Q."/>
            <person name="Li W."/>
            <person name="Zhang B."/>
            <person name="Hu W."/>
            <person name="Zhang Y."/>
            <person name="Tian X."/>
            <person name="Jiao Y."/>
            <person name="Liang X."/>
            <person name="Jin J."/>
            <person name="Gao L."/>
            <person name="Zheng W."/>
            <person name="Hao B."/>
            <person name="Liu S.-M."/>
            <person name="Wang W."/>
            <person name="Yuan L."/>
            <person name="Cao M."/>
            <person name="McDermott J."/>
            <person name="Samudrala R."/>
            <person name="Wang J."/>
            <person name="Wong G.K.-S."/>
            <person name="Yang H."/>
        </authorList>
    </citation>
    <scope>NUCLEOTIDE SEQUENCE [LARGE SCALE GENOMIC DNA]</scope>
    <source>
        <strain>cv. Nipponbare</strain>
    </source>
</reference>
<reference key="5">
    <citation type="journal article" date="2003" name="Science">
        <title>Collection, mapping, and annotation of over 28,000 cDNA clones from japonica rice.</title>
        <authorList>
            <consortium name="The rice full-length cDNA consortium"/>
        </authorList>
    </citation>
    <scope>NUCLEOTIDE SEQUENCE [LARGE SCALE MRNA] OF 259-647</scope>
    <source>
        <strain>cv. Nipponbare</strain>
    </source>
</reference>
<reference key="6">
    <citation type="journal article" date="2008" name="BMC Genomics">
        <title>Genome-wide analysis of CCCH zinc finger family in Arabidopsis and rice.</title>
        <authorList>
            <person name="Wang D."/>
            <person name="Guo Y."/>
            <person name="Wu C."/>
            <person name="Yang G."/>
            <person name="Li Y."/>
            <person name="Zheng C."/>
        </authorList>
    </citation>
    <scope>NOMENCLATURE</scope>
</reference>
<gene>
    <name type="ordered locus">Os02g0831100</name>
    <name type="ordered locus">LOC_Os02g58440</name>
    <name type="ORF">OJ1149_C12.8</name>
    <name type="ORF">OsJ_008677</name>
</gene>
<keyword id="KW-0238">DNA-binding</keyword>
<keyword id="KW-0479">Metal-binding</keyword>
<keyword id="KW-1185">Reference proteome</keyword>
<keyword id="KW-0677">Repeat</keyword>
<keyword id="KW-0862">Zinc</keyword>
<keyword id="KW-0863">Zinc-finger</keyword>
<sequence>MDSAVRPPVDAEEARRRRSTDCIYFLASPLTCKKGSECEYRHSDAARMNPRDCWYWFNGNCANPKCSFRHPPLDGLVGAPTTPRTSQQSAPQVSVPAQAPVPNPASGTAKQGVPCYYFQKGMCVKGDRCAFLHLPQATGSPAPQHTTKVFAPASVPHPQLKNSWTKPNSSAQQNAPPAIFDKPKDSAHNGKTAQKQNLTNRAGHSSGIIHDKKGSYMPSGVTKNYRPPPSTGDDLAENGVEMGEFVREPSPGSDVLTGGADDNTEQSLREDRGAYRRTNGEQHIGMLRQTHDSYGFERSHRGSAEKLLSESRFSQREPMPLTADSSDLRQRLLKQRRLNNPRSGQVSDRHNVYPEDERHDRHRQRGEEQASNDGVSSSRLRGRIRLPAETTFDRLGLQPEKERDRGPRARLSPPSQTDLRGKLHDRLKAKPNEDVSGNVQSSLSKANEDAESLNFAGPKSLAELKAKKVAGSLMKSSRSLTGPVRMTSEIVTIKDSSDPVLFDGPKPLNAILKRKREADSGNATDFGSKREEHSGGDEEGSQNDFRNIEDDIVGMNTEGNGEEAFQPEDDVVYGDSLSPADDIAAEAADDASRELEEQQDVETAEEYDYEMDDVNAAEENDYQEYEDEDDDLEDDDDFARKVGVMIT</sequence>
<feature type="chain" id="PRO_0000346815" description="Zinc finger CCCH domain-containing protein 19">
    <location>
        <begin position="1"/>
        <end position="647"/>
    </location>
</feature>
<feature type="zinc finger region" description="C3H1-type 1" evidence="1">
    <location>
        <begin position="16"/>
        <end position="45"/>
    </location>
</feature>
<feature type="zinc finger region" description="C3H1-type 2" evidence="1">
    <location>
        <begin position="47"/>
        <end position="73"/>
    </location>
</feature>
<feature type="zinc finger region" description="C3H1-type 3" evidence="1">
    <location>
        <begin position="109"/>
        <end position="136"/>
    </location>
</feature>
<feature type="region of interest" description="Disordered" evidence="2">
    <location>
        <begin position="78"/>
        <end position="106"/>
    </location>
</feature>
<feature type="region of interest" description="Disordered" evidence="2">
    <location>
        <begin position="155"/>
        <end position="280"/>
    </location>
</feature>
<feature type="region of interest" description="Disordered" evidence="2">
    <location>
        <begin position="308"/>
        <end position="327"/>
    </location>
</feature>
<feature type="region of interest" description="Disordered" evidence="2">
    <location>
        <begin position="335"/>
        <end position="452"/>
    </location>
</feature>
<feature type="region of interest" description="Disordered" evidence="2">
    <location>
        <begin position="512"/>
        <end position="580"/>
    </location>
</feature>
<feature type="region of interest" description="Disordered" evidence="2">
    <location>
        <begin position="586"/>
        <end position="605"/>
    </location>
</feature>
<feature type="compositionally biased region" description="Low complexity" evidence="2">
    <location>
        <begin position="86"/>
        <end position="106"/>
    </location>
</feature>
<feature type="compositionally biased region" description="Polar residues" evidence="2">
    <location>
        <begin position="160"/>
        <end position="175"/>
    </location>
</feature>
<feature type="compositionally biased region" description="Polar residues" evidence="2">
    <location>
        <begin position="189"/>
        <end position="203"/>
    </location>
</feature>
<feature type="compositionally biased region" description="Basic and acidic residues" evidence="2">
    <location>
        <begin position="267"/>
        <end position="280"/>
    </location>
</feature>
<feature type="compositionally biased region" description="Basic and acidic residues" evidence="2">
    <location>
        <begin position="347"/>
        <end position="359"/>
    </location>
</feature>
<feature type="compositionally biased region" description="Polar residues" evidence="2">
    <location>
        <begin position="369"/>
        <end position="379"/>
    </location>
</feature>
<feature type="compositionally biased region" description="Basic and acidic residues" evidence="2">
    <location>
        <begin position="419"/>
        <end position="433"/>
    </location>
</feature>
<feature type="compositionally biased region" description="Polar residues" evidence="2">
    <location>
        <begin position="435"/>
        <end position="445"/>
    </location>
</feature>
<feature type="compositionally biased region" description="Basic and acidic residues" evidence="2">
    <location>
        <begin position="527"/>
        <end position="536"/>
    </location>
</feature>
<evidence type="ECO:0000255" key="1">
    <source>
        <dbReference type="PROSITE-ProRule" id="PRU00723"/>
    </source>
</evidence>
<evidence type="ECO:0000256" key="2">
    <source>
        <dbReference type="SAM" id="MobiDB-lite"/>
    </source>
</evidence>
<evidence type="ECO:0000305" key="3"/>
<dbReference type="EMBL" id="AP004082">
    <property type="protein sequence ID" value="BAD23001.1"/>
    <property type="status" value="ALT_SEQ"/>
    <property type="molecule type" value="Genomic_DNA"/>
</dbReference>
<dbReference type="EMBL" id="AP008208">
    <property type="protein sequence ID" value="BAF10530.1"/>
    <property type="status" value="ALT_SEQ"/>
    <property type="molecule type" value="Genomic_DNA"/>
</dbReference>
<dbReference type="EMBL" id="AP014958">
    <property type="status" value="NOT_ANNOTATED_CDS"/>
    <property type="molecule type" value="Genomic_DNA"/>
</dbReference>
<dbReference type="EMBL" id="CM000139">
    <property type="protein sequence ID" value="EAZ25194.1"/>
    <property type="molecule type" value="Genomic_DNA"/>
</dbReference>
<dbReference type="EMBL" id="AK060600">
    <property type="status" value="NOT_ANNOTATED_CDS"/>
    <property type="molecule type" value="mRNA"/>
</dbReference>
<dbReference type="RefSeq" id="XP_015626088.1">
    <property type="nucleotide sequence ID" value="XM_015770602.1"/>
</dbReference>
<dbReference type="FunCoup" id="Q6K977">
    <property type="interactions" value="15"/>
</dbReference>
<dbReference type="STRING" id="39947.Q6K977"/>
<dbReference type="iPTMnet" id="Q6K977"/>
<dbReference type="PaxDb" id="39947-Q6K977"/>
<dbReference type="KEGG" id="dosa:Os02g0831100"/>
<dbReference type="eggNOG" id="KOG4791">
    <property type="taxonomic scope" value="Eukaryota"/>
</dbReference>
<dbReference type="HOGENOM" id="CLU_710945_0_0_1"/>
<dbReference type="InParanoid" id="Q6K977"/>
<dbReference type="OrthoDB" id="5395350at2759"/>
<dbReference type="Proteomes" id="UP000000763">
    <property type="component" value="Chromosome 2"/>
</dbReference>
<dbReference type="Proteomes" id="UP000007752">
    <property type="component" value="Chromosome 2"/>
</dbReference>
<dbReference type="Proteomes" id="UP000059680">
    <property type="component" value="Chromosome 2"/>
</dbReference>
<dbReference type="GO" id="GO:0003677">
    <property type="term" value="F:DNA binding"/>
    <property type="evidence" value="ECO:0007669"/>
    <property type="project" value="UniProtKB-KW"/>
</dbReference>
<dbReference type="GO" id="GO:0003729">
    <property type="term" value="F:mRNA binding"/>
    <property type="evidence" value="ECO:0000318"/>
    <property type="project" value="GO_Central"/>
</dbReference>
<dbReference type="GO" id="GO:0008270">
    <property type="term" value="F:zinc ion binding"/>
    <property type="evidence" value="ECO:0007669"/>
    <property type="project" value="UniProtKB-KW"/>
</dbReference>
<dbReference type="FunFam" id="4.10.1000.10:FF:000021">
    <property type="entry name" value="Zinc finger CCCH domain-containing protein 17"/>
    <property type="match status" value="1"/>
</dbReference>
<dbReference type="Gene3D" id="4.10.1000.10">
    <property type="entry name" value="Zinc finger, CCCH-type"/>
    <property type="match status" value="2"/>
</dbReference>
<dbReference type="InterPro" id="IPR041686">
    <property type="entry name" value="Znf-CCCH_3"/>
</dbReference>
<dbReference type="InterPro" id="IPR000571">
    <property type="entry name" value="Znf_CCCH"/>
</dbReference>
<dbReference type="InterPro" id="IPR036855">
    <property type="entry name" value="Znf_CCCH_sf"/>
</dbReference>
<dbReference type="PANTHER" id="PTHR15725:SF23">
    <property type="entry name" value="ZINC FINGER CCCH DOMAIN-CONTAINING PROTEIN 19"/>
    <property type="match status" value="1"/>
</dbReference>
<dbReference type="PANTHER" id="PTHR15725">
    <property type="entry name" value="ZN-FINGER, C-X8-C-X5-C-X3-H TYPE-CONTAINING"/>
    <property type="match status" value="1"/>
</dbReference>
<dbReference type="Pfam" id="PF14608">
    <property type="entry name" value="zf-CCCH_2"/>
    <property type="match status" value="1"/>
</dbReference>
<dbReference type="Pfam" id="PF15663">
    <property type="entry name" value="zf-CCCH_3"/>
    <property type="match status" value="1"/>
</dbReference>
<dbReference type="SMART" id="SM00356">
    <property type="entry name" value="ZnF_C3H1"/>
    <property type="match status" value="3"/>
</dbReference>
<dbReference type="SUPFAM" id="SSF90229">
    <property type="entry name" value="CCCH zinc finger"/>
    <property type="match status" value="1"/>
</dbReference>
<dbReference type="PROSITE" id="PS50103">
    <property type="entry name" value="ZF_C3H1"/>
    <property type="match status" value="3"/>
</dbReference>
<accession>Q6K977</accession>
<accession>A3AD05</accession>
<comment type="sequence caution" evidence="3">
    <conflict type="erroneous gene model prediction">
        <sequence resource="EMBL-CDS" id="BAD23001"/>
    </conflict>
</comment>
<comment type="sequence caution" evidence="3">
    <conflict type="erroneous gene model prediction">
        <sequence resource="EMBL-CDS" id="BAF10530"/>
    </conflict>
</comment>
<name>C3H19_ORYSJ</name>
<organism>
    <name type="scientific">Oryza sativa subsp. japonica</name>
    <name type="common">Rice</name>
    <dbReference type="NCBI Taxonomy" id="39947"/>
    <lineage>
        <taxon>Eukaryota</taxon>
        <taxon>Viridiplantae</taxon>
        <taxon>Streptophyta</taxon>
        <taxon>Embryophyta</taxon>
        <taxon>Tracheophyta</taxon>
        <taxon>Spermatophyta</taxon>
        <taxon>Magnoliopsida</taxon>
        <taxon>Liliopsida</taxon>
        <taxon>Poales</taxon>
        <taxon>Poaceae</taxon>
        <taxon>BOP clade</taxon>
        <taxon>Oryzoideae</taxon>
        <taxon>Oryzeae</taxon>
        <taxon>Oryzinae</taxon>
        <taxon>Oryza</taxon>
        <taxon>Oryza sativa</taxon>
    </lineage>
</organism>
<proteinExistence type="evidence at transcript level"/>